<accession>Q68670</accession>
<dbReference type="EMBL" id="U56915">
    <property type="protein sequence ID" value="AAA99166.1"/>
    <property type="molecule type" value="Genomic_DNA"/>
</dbReference>
<dbReference type="SMR" id="Q68670"/>
<dbReference type="GO" id="GO:0044177">
    <property type="term" value="C:host cell Golgi apparatus"/>
    <property type="evidence" value="ECO:0007669"/>
    <property type="project" value="UniProtKB-SubCell"/>
</dbReference>
<dbReference type="GO" id="GO:0020002">
    <property type="term" value="C:host cell plasma membrane"/>
    <property type="evidence" value="ECO:0007669"/>
    <property type="project" value="UniProtKB-SubCell"/>
</dbReference>
<dbReference type="GO" id="GO:0016020">
    <property type="term" value="C:membrane"/>
    <property type="evidence" value="ECO:0007669"/>
    <property type="project" value="UniProtKB-KW"/>
</dbReference>
<dbReference type="GO" id="GO:0019031">
    <property type="term" value="C:viral envelope"/>
    <property type="evidence" value="ECO:0007669"/>
    <property type="project" value="UniProtKB-UniRule"/>
</dbReference>
<dbReference type="GO" id="GO:0055036">
    <property type="term" value="C:virion membrane"/>
    <property type="evidence" value="ECO:0007669"/>
    <property type="project" value="UniProtKB-SubCell"/>
</dbReference>
<dbReference type="GO" id="GO:0098670">
    <property type="term" value="P:entry receptor-mediated virion attachment to host cell"/>
    <property type="evidence" value="ECO:0007669"/>
    <property type="project" value="UniProtKB-KW"/>
</dbReference>
<dbReference type="GO" id="GO:0019064">
    <property type="term" value="P:fusion of virus membrane with host plasma membrane"/>
    <property type="evidence" value="ECO:0007669"/>
    <property type="project" value="UniProtKB-UniRule"/>
</dbReference>
<dbReference type="GO" id="GO:0046718">
    <property type="term" value="P:symbiont entry into host cell"/>
    <property type="evidence" value="ECO:0007669"/>
    <property type="project" value="UniProtKB-KW"/>
</dbReference>
<dbReference type="HAMAP" id="MF_04036">
    <property type="entry name" value="HSV_GL_betahv"/>
    <property type="match status" value="1"/>
</dbReference>
<dbReference type="InterPro" id="IPR002689">
    <property type="entry name" value="Cytomegalo_gL"/>
</dbReference>
<dbReference type="Pfam" id="PF01801">
    <property type="entry name" value="Cytomega_gL"/>
    <property type="match status" value="1"/>
</dbReference>
<dbReference type="PROSITE" id="PS52025">
    <property type="entry name" value="GL_BHV"/>
    <property type="match status" value="1"/>
</dbReference>
<name>GL_HCMV4</name>
<organismHost>
    <name type="scientific">Homo sapiens</name>
    <name type="common">Human</name>
    <dbReference type="NCBI Taxonomy" id="9606"/>
</organismHost>
<reference key="1">
    <citation type="submission" date="1996-04" db="EMBL/GenBank/DDBJ databases">
        <authorList>
            <person name="Milne R.S.B."/>
            <person name="Mathers K.E."/>
            <person name="Booth J.C."/>
        </authorList>
    </citation>
    <scope>NUCLEOTIDE SEQUENCE [GENOMIC DNA]</scope>
</reference>
<proteinExistence type="inferred from homology"/>
<protein>
    <recommendedName>
        <fullName evidence="2">Envelope glycoprotein L</fullName>
        <shortName evidence="2">gL</shortName>
    </recommendedName>
</protein>
<organism>
    <name type="scientific">Human cytomegalovirus (strain 4654)</name>
    <name type="common">HHV-5</name>
    <name type="synonym">Human herpesvirus 5</name>
    <dbReference type="NCBI Taxonomy" id="69164"/>
    <lineage>
        <taxon>Viruses</taxon>
        <taxon>Duplodnaviria</taxon>
        <taxon>Heunggongvirae</taxon>
        <taxon>Peploviricota</taxon>
        <taxon>Herviviricetes</taxon>
        <taxon>Herpesvirales</taxon>
        <taxon>Orthoherpesviridae</taxon>
        <taxon>Betaherpesvirinae</taxon>
        <taxon>Cytomegalovirus</taxon>
        <taxon>Cytomegalovirus humanbeta5</taxon>
        <taxon>Human cytomegalovirus</taxon>
    </lineage>
</organism>
<gene>
    <name evidence="2" type="primary">gL</name>
    <name type="synonym">UL115</name>
</gene>
<comment type="function">
    <text evidence="1 2">The heterodimer glycoprotein H-glycoprotein L is required for the fusion of viral and plasma membranes leading to virus entry into the host cell. Acts as a functional inhibitor of gH and maintains gH in an inhibited form. Upon binding to host integrins, gL dissociates from gH leading to activation of the viral fusion glycoproteins gB and gH (By similarity). In human cytomegalovirus, forms two distincts complexes to mediate viral entry, a trimer and a pentamer at the surface of the virion envelope. The gH-gL-gO trimer is required for infection in fibroblasts by interacting with host PDGFRA, and in glioblastoma cells by interacting with host EPHA2. The gH-gL-UL128-UL130-UL131A pentamer is essential for viral entry in epithelial, endothelial and myeloid cells via interaction with host NRP2 (By similarity).</text>
</comment>
<comment type="subunit">
    <text evidence="1 2">Interacts with glycoprotein H (gH); this interaction is necessary for the correct processing and cell surface expression of gH (By similarity). Forms the envelope pentamer complex (PC) composed of gH, gL, UL128, UL130, and UL131A. The pentamer interacts with host NRP2. Forms the envelope trimer complex composed of gH, gL, and gO. The trimer interacts with host PDGFRA (By similarity). The trimer also interacts with host EPHA2 (By similarity).</text>
</comment>
<comment type="subcellular location">
    <subcellularLocation>
        <location evidence="2">Virion membrane</location>
        <topology evidence="2">Peripheral membrane protein</topology>
        <orientation evidence="2">Extracellular side</orientation>
    </subcellularLocation>
    <subcellularLocation>
        <location evidence="2">Host cell membrane</location>
        <topology evidence="2">Peripheral membrane protein</topology>
        <orientation evidence="2">Extracellular side</orientation>
    </subcellularLocation>
    <subcellularLocation>
        <location evidence="2">Host Golgi apparatus</location>
        <location evidence="2">Host trans-Golgi network</location>
    </subcellularLocation>
    <text evidence="2">gL associates with the extravirion surface through its binding to gH. During virion morphogenesis, this protein probably accumulates in the host trans-Golgi where secondary envelopment occurs.</text>
</comment>
<comment type="similarity">
    <text evidence="3">Belongs to the herpesviridae glycoprotein L (gL) family. Betaherpesvirinae gL subfamily.</text>
</comment>
<keyword id="KW-1015">Disulfide bond</keyword>
<keyword id="KW-1169">Fusion of virus membrane with host cell membrane</keyword>
<keyword id="KW-1168">Fusion of virus membrane with host membrane</keyword>
<keyword id="KW-0325">Glycoprotein</keyword>
<keyword id="KW-1032">Host cell membrane</keyword>
<keyword id="KW-1040">Host Golgi apparatus</keyword>
<keyword id="KW-1043">Host membrane</keyword>
<keyword id="KW-0945">Host-virus interaction</keyword>
<keyword id="KW-0472">Membrane</keyword>
<keyword id="KW-0732">Signal</keyword>
<keyword id="KW-1161">Viral attachment to host cell</keyword>
<keyword id="KW-1234">Viral attachment to host entry receptor</keyword>
<keyword id="KW-0261">Viral envelope protein</keyword>
<keyword id="KW-1162">Viral penetration into host cytoplasm</keyword>
<keyword id="KW-0946">Virion</keyword>
<keyword id="KW-1160">Virus entry into host cell</keyword>
<feature type="signal peptide" evidence="2">
    <location>
        <begin position="1"/>
        <end position="30"/>
    </location>
</feature>
<feature type="chain" id="PRO_0000038283" description="Envelope glycoprotein L" evidence="2">
    <location>
        <begin position="31"/>
        <end position="278"/>
    </location>
</feature>
<feature type="domain" description="gL betaherpesvirus-type" evidence="3">
    <location>
        <begin position="43"/>
        <end position="256"/>
    </location>
</feature>
<feature type="disulfide bond" description="Interchain" evidence="3">
    <location>
        <position position="47"/>
    </location>
</feature>
<feature type="disulfide bond" description="Interchain" evidence="3">
    <location>
        <position position="54"/>
    </location>
</feature>
<feature type="disulfide bond" description="Interchain" evidence="3">
    <location>
        <position position="144"/>
    </location>
</feature>
<feature type="disulfide bond" evidence="3">
    <location>
        <begin position="154"/>
        <end position="159"/>
    </location>
</feature>
<sequence>MCRRPDCGFSFSPGPVILLWCCLLLPIVSSAAVSVAPTAAEKVPAECPELTRRCLLGEVFQGDKYESWLRPLVNVTGRDGPLSQLIRYRPVTPEAANSVLLDEAFLDTLALLYNNPDQLRALLTLLSSDTAPRWMTVMRGYSECGDGSPAVYTCVDDLCRGYDLTRLSYGRSIFTEHVLGFELVPPSLFNVVVAIRNEATRTNRAVRLPVSTAAAPEGITLFYGLYNGVKEFCLRHQLDPPLLRHLDKYYAGLPPELKQTRVNLPAHSRYGPQAVDAR</sequence>
<evidence type="ECO:0000250" key="1">
    <source>
        <dbReference type="UniProtKB" id="F5HCH8"/>
    </source>
</evidence>
<evidence type="ECO:0000255" key="2">
    <source>
        <dbReference type="HAMAP-Rule" id="MF_04036"/>
    </source>
</evidence>
<evidence type="ECO:0000255" key="3">
    <source>
        <dbReference type="PROSITE-ProRule" id="PRU01369"/>
    </source>
</evidence>